<accession>P0DA60</accession>
<accession>P63928</accession>
<accession>Q9A084</accession>
<name>DEOB_STRP3</name>
<evidence type="ECO:0000255" key="1">
    <source>
        <dbReference type="HAMAP-Rule" id="MF_00740"/>
    </source>
</evidence>
<feature type="chain" id="PRO_0000199855" description="Phosphopentomutase">
    <location>
        <begin position="1"/>
        <end position="403"/>
    </location>
</feature>
<feature type="binding site" evidence="1">
    <location>
        <position position="13"/>
    </location>
    <ligand>
        <name>Mn(2+)</name>
        <dbReference type="ChEBI" id="CHEBI:29035"/>
        <label>1</label>
    </ligand>
</feature>
<feature type="binding site" evidence="1">
    <location>
        <position position="298"/>
    </location>
    <ligand>
        <name>Mn(2+)</name>
        <dbReference type="ChEBI" id="CHEBI:29035"/>
        <label>2</label>
    </ligand>
</feature>
<feature type="binding site" evidence="1">
    <location>
        <position position="303"/>
    </location>
    <ligand>
        <name>Mn(2+)</name>
        <dbReference type="ChEBI" id="CHEBI:29035"/>
        <label>2</label>
    </ligand>
</feature>
<feature type="binding site" evidence="1">
    <location>
        <position position="339"/>
    </location>
    <ligand>
        <name>Mn(2+)</name>
        <dbReference type="ChEBI" id="CHEBI:29035"/>
        <label>1</label>
    </ligand>
</feature>
<feature type="binding site" evidence="1">
    <location>
        <position position="340"/>
    </location>
    <ligand>
        <name>Mn(2+)</name>
        <dbReference type="ChEBI" id="CHEBI:29035"/>
        <label>1</label>
    </ligand>
</feature>
<feature type="binding site" evidence="1">
    <location>
        <position position="351"/>
    </location>
    <ligand>
        <name>Mn(2+)</name>
        <dbReference type="ChEBI" id="CHEBI:29035"/>
        <label>2</label>
    </ligand>
</feature>
<proteinExistence type="inferred from homology"/>
<organism>
    <name type="scientific">Streptococcus pyogenes serotype M3 (strain ATCC BAA-595 / MGAS315)</name>
    <dbReference type="NCBI Taxonomy" id="198466"/>
    <lineage>
        <taxon>Bacteria</taxon>
        <taxon>Bacillati</taxon>
        <taxon>Bacillota</taxon>
        <taxon>Bacilli</taxon>
        <taxon>Lactobacillales</taxon>
        <taxon>Streptococcaceae</taxon>
        <taxon>Streptococcus</taxon>
    </lineage>
</organism>
<keyword id="KW-0963">Cytoplasm</keyword>
<keyword id="KW-0413">Isomerase</keyword>
<keyword id="KW-0464">Manganese</keyword>
<keyword id="KW-0479">Metal-binding</keyword>
<gene>
    <name evidence="1" type="primary">deoB</name>
    <name type="ordered locus">SpyM3_0609</name>
</gene>
<dbReference type="EC" id="5.4.2.7" evidence="1"/>
<dbReference type="EMBL" id="AE014074">
    <property type="protein sequence ID" value="AAM79216.1"/>
    <property type="molecule type" value="Genomic_DNA"/>
</dbReference>
<dbReference type="RefSeq" id="WP_002994004.1">
    <property type="nucleotide sequence ID" value="NC_004070.1"/>
</dbReference>
<dbReference type="SMR" id="P0DA60"/>
<dbReference type="KEGG" id="spg:SpyM3_0609"/>
<dbReference type="HOGENOM" id="CLU_053861_0_0_9"/>
<dbReference type="UniPathway" id="UPA00002">
    <property type="reaction ID" value="UER00467"/>
</dbReference>
<dbReference type="Proteomes" id="UP000000564">
    <property type="component" value="Chromosome"/>
</dbReference>
<dbReference type="GO" id="GO:0005829">
    <property type="term" value="C:cytosol"/>
    <property type="evidence" value="ECO:0007669"/>
    <property type="project" value="TreeGrafter"/>
</dbReference>
<dbReference type="GO" id="GO:0000287">
    <property type="term" value="F:magnesium ion binding"/>
    <property type="evidence" value="ECO:0007669"/>
    <property type="project" value="InterPro"/>
</dbReference>
<dbReference type="GO" id="GO:0030145">
    <property type="term" value="F:manganese ion binding"/>
    <property type="evidence" value="ECO:0007669"/>
    <property type="project" value="UniProtKB-UniRule"/>
</dbReference>
<dbReference type="GO" id="GO:0008973">
    <property type="term" value="F:phosphopentomutase activity"/>
    <property type="evidence" value="ECO:0007669"/>
    <property type="project" value="UniProtKB-UniRule"/>
</dbReference>
<dbReference type="GO" id="GO:0006018">
    <property type="term" value="P:2-deoxyribose 1-phosphate catabolic process"/>
    <property type="evidence" value="ECO:0007669"/>
    <property type="project" value="UniProtKB-UniRule"/>
</dbReference>
<dbReference type="GO" id="GO:0006015">
    <property type="term" value="P:5-phosphoribose 1-diphosphate biosynthetic process"/>
    <property type="evidence" value="ECO:0007669"/>
    <property type="project" value="UniProtKB-UniPathway"/>
</dbReference>
<dbReference type="GO" id="GO:0043094">
    <property type="term" value="P:metabolic compound salvage"/>
    <property type="evidence" value="ECO:0007669"/>
    <property type="project" value="InterPro"/>
</dbReference>
<dbReference type="GO" id="GO:0009117">
    <property type="term" value="P:nucleotide metabolic process"/>
    <property type="evidence" value="ECO:0007669"/>
    <property type="project" value="InterPro"/>
</dbReference>
<dbReference type="CDD" id="cd16009">
    <property type="entry name" value="PPM"/>
    <property type="match status" value="1"/>
</dbReference>
<dbReference type="FunFam" id="3.30.70.1250:FF:000001">
    <property type="entry name" value="Phosphopentomutase"/>
    <property type="match status" value="1"/>
</dbReference>
<dbReference type="Gene3D" id="3.40.720.10">
    <property type="entry name" value="Alkaline Phosphatase, subunit A"/>
    <property type="match status" value="1"/>
</dbReference>
<dbReference type="Gene3D" id="3.30.70.1250">
    <property type="entry name" value="Phosphopentomutase"/>
    <property type="match status" value="1"/>
</dbReference>
<dbReference type="HAMAP" id="MF_00740">
    <property type="entry name" value="Phosphopentomut"/>
    <property type="match status" value="1"/>
</dbReference>
<dbReference type="InterPro" id="IPR017850">
    <property type="entry name" value="Alkaline_phosphatase_core_sf"/>
</dbReference>
<dbReference type="InterPro" id="IPR010045">
    <property type="entry name" value="DeoB"/>
</dbReference>
<dbReference type="InterPro" id="IPR006124">
    <property type="entry name" value="Metalloenzyme"/>
</dbReference>
<dbReference type="InterPro" id="IPR024052">
    <property type="entry name" value="Phosphopentomutase_DeoB_cap_sf"/>
</dbReference>
<dbReference type="NCBIfam" id="TIGR01696">
    <property type="entry name" value="deoB"/>
    <property type="match status" value="1"/>
</dbReference>
<dbReference type="NCBIfam" id="NF003766">
    <property type="entry name" value="PRK05362.1"/>
    <property type="match status" value="1"/>
</dbReference>
<dbReference type="PANTHER" id="PTHR21110">
    <property type="entry name" value="PHOSPHOPENTOMUTASE"/>
    <property type="match status" value="1"/>
</dbReference>
<dbReference type="PANTHER" id="PTHR21110:SF0">
    <property type="entry name" value="PHOSPHOPENTOMUTASE"/>
    <property type="match status" value="1"/>
</dbReference>
<dbReference type="Pfam" id="PF01676">
    <property type="entry name" value="Metalloenzyme"/>
    <property type="match status" value="1"/>
</dbReference>
<dbReference type="PIRSF" id="PIRSF001491">
    <property type="entry name" value="Ppentomutase"/>
    <property type="match status" value="1"/>
</dbReference>
<dbReference type="SUPFAM" id="SSF53649">
    <property type="entry name" value="Alkaline phosphatase-like"/>
    <property type="match status" value="1"/>
</dbReference>
<dbReference type="SUPFAM" id="SSF143856">
    <property type="entry name" value="DeoB insert domain-like"/>
    <property type="match status" value="1"/>
</dbReference>
<sequence length="403" mass="44224">MSKFNRIHLVVLDSVGIGAAPDADKFFNAGVADTDSDTLGHISEAAGLSVPNMAKIGLGNISRPIPLKTVPTEDNPTGYVTKLEEVSLGKDTMTGHWEIMGLNITEPFDTFWNGFPEEILTKIEEFSGRKIIREANKPYSGTAVIDDFGPRQMETGELIVYTSADPVLQIAAHEDIIPVEELYKICEYARSITLERPALLGRIIARPYVGDPGNFTRTANRHDYAVSPFQDTVLNKLADAGVPTYAVGKINDIFNGSGITNDMGHNKSNSHGIDTLIKTLQLPEFTKGFSFTNLVDFDANFGHRRDPEGYRDCLHEFDNRLPEIIANMKEDDLLLITADHGNDPTYAGTDHTREYIPLLAYSVSFTGNGLIPQGHFADISATVAENFGVDTAMIGESFLSHLK</sequence>
<protein>
    <recommendedName>
        <fullName evidence="1">Phosphopentomutase</fullName>
        <ecNumber evidence="1">5.4.2.7</ecNumber>
    </recommendedName>
    <alternativeName>
        <fullName evidence="1">Phosphodeoxyribomutase</fullName>
    </alternativeName>
</protein>
<comment type="function">
    <text evidence="1">Isomerase that catalyzes the conversion of deoxy-ribose 1-phosphate (dRib-1-P) and ribose 1-phosphate (Rib-1-P) to deoxy-ribose 5-phosphate (dRib-5-P) and ribose 5-phosphate (Rib-5-P), respectively.</text>
</comment>
<comment type="catalytic activity">
    <reaction evidence="1">
        <text>2-deoxy-alpha-D-ribose 1-phosphate = 2-deoxy-D-ribose 5-phosphate</text>
        <dbReference type="Rhea" id="RHEA:27658"/>
        <dbReference type="ChEBI" id="CHEBI:57259"/>
        <dbReference type="ChEBI" id="CHEBI:62877"/>
        <dbReference type="EC" id="5.4.2.7"/>
    </reaction>
</comment>
<comment type="catalytic activity">
    <reaction evidence="1">
        <text>alpha-D-ribose 1-phosphate = D-ribose 5-phosphate</text>
        <dbReference type="Rhea" id="RHEA:18793"/>
        <dbReference type="ChEBI" id="CHEBI:57720"/>
        <dbReference type="ChEBI" id="CHEBI:78346"/>
        <dbReference type="EC" id="5.4.2.7"/>
    </reaction>
</comment>
<comment type="cofactor">
    <cofactor evidence="1">
        <name>Mn(2+)</name>
        <dbReference type="ChEBI" id="CHEBI:29035"/>
    </cofactor>
    <text evidence="1">Binds 2 manganese ions.</text>
</comment>
<comment type="pathway">
    <text evidence="1">Carbohydrate degradation; 2-deoxy-D-ribose 1-phosphate degradation; D-glyceraldehyde 3-phosphate and acetaldehyde from 2-deoxy-alpha-D-ribose 1-phosphate: step 1/2.</text>
</comment>
<comment type="subcellular location">
    <subcellularLocation>
        <location evidence="1">Cytoplasm</location>
    </subcellularLocation>
</comment>
<comment type="similarity">
    <text evidence="1">Belongs to the phosphopentomutase family.</text>
</comment>
<reference key="1">
    <citation type="journal article" date="2002" name="Proc. Natl. Acad. Sci. U.S.A.">
        <title>Genome sequence of a serotype M3 strain of group A Streptococcus: phage-encoded toxins, the high-virulence phenotype, and clone emergence.</title>
        <authorList>
            <person name="Beres S.B."/>
            <person name="Sylva G.L."/>
            <person name="Barbian K.D."/>
            <person name="Lei B."/>
            <person name="Hoff J.S."/>
            <person name="Mammarella N.D."/>
            <person name="Liu M.-Y."/>
            <person name="Smoot J.C."/>
            <person name="Porcella S.F."/>
            <person name="Parkins L.D."/>
            <person name="Campbell D.S."/>
            <person name="Smith T.M."/>
            <person name="McCormick J.K."/>
            <person name="Leung D.Y.M."/>
            <person name="Schlievert P.M."/>
            <person name="Musser J.M."/>
        </authorList>
    </citation>
    <scope>NUCLEOTIDE SEQUENCE [LARGE SCALE GENOMIC DNA]</scope>
    <source>
        <strain>ATCC BAA-595 / MGAS315</strain>
    </source>
</reference>